<evidence type="ECO:0000255" key="1">
    <source>
        <dbReference type="HAMAP-Rule" id="MF_01077"/>
    </source>
</evidence>
<protein>
    <recommendedName>
        <fullName evidence="1">Ribosome maturation factor RimP</fullName>
    </recommendedName>
</protein>
<sequence>MQLTELIETTVTGLGYELVDLERTGRGMVCVYIDQPAGITIDDCEKVTRQLQHVLTVENIDYERLEVSSPGLDRPLKKLADFTRFAGSEAVITLKKPLDGRKTYRGILHAPNGETIGLEFERKKGEAAMLDFTLADIDKARLIPHVDFRSRKQ</sequence>
<proteinExistence type="inferred from homology"/>
<organism>
    <name type="scientific">Burkholderia mallei (strain ATCC 23344)</name>
    <dbReference type="NCBI Taxonomy" id="243160"/>
    <lineage>
        <taxon>Bacteria</taxon>
        <taxon>Pseudomonadati</taxon>
        <taxon>Pseudomonadota</taxon>
        <taxon>Betaproteobacteria</taxon>
        <taxon>Burkholderiales</taxon>
        <taxon>Burkholderiaceae</taxon>
        <taxon>Burkholderia</taxon>
        <taxon>pseudomallei group</taxon>
    </lineage>
</organism>
<name>RIMP_BURMA</name>
<reference key="1">
    <citation type="journal article" date="2004" name="Proc. Natl. Acad. Sci. U.S.A.">
        <title>Structural flexibility in the Burkholderia mallei genome.</title>
        <authorList>
            <person name="Nierman W.C."/>
            <person name="DeShazer D."/>
            <person name="Kim H.S."/>
            <person name="Tettelin H."/>
            <person name="Nelson K.E."/>
            <person name="Feldblyum T.V."/>
            <person name="Ulrich R.L."/>
            <person name="Ronning C.M."/>
            <person name="Brinkac L.M."/>
            <person name="Daugherty S.C."/>
            <person name="Davidsen T.D."/>
            <person name="DeBoy R.T."/>
            <person name="Dimitrov G."/>
            <person name="Dodson R.J."/>
            <person name="Durkin A.S."/>
            <person name="Gwinn M.L."/>
            <person name="Haft D.H."/>
            <person name="Khouri H.M."/>
            <person name="Kolonay J.F."/>
            <person name="Madupu R."/>
            <person name="Mohammoud Y."/>
            <person name="Nelson W.C."/>
            <person name="Radune D."/>
            <person name="Romero C.M."/>
            <person name="Sarria S."/>
            <person name="Selengut J."/>
            <person name="Shamblin C."/>
            <person name="Sullivan S.A."/>
            <person name="White O."/>
            <person name="Yu Y."/>
            <person name="Zafar N."/>
            <person name="Zhou L."/>
            <person name="Fraser C.M."/>
        </authorList>
    </citation>
    <scope>NUCLEOTIDE SEQUENCE [LARGE SCALE GENOMIC DNA]</scope>
    <source>
        <strain>ATCC 23344</strain>
    </source>
</reference>
<keyword id="KW-0963">Cytoplasm</keyword>
<keyword id="KW-1185">Reference proteome</keyword>
<keyword id="KW-0690">Ribosome biogenesis</keyword>
<comment type="function">
    <text evidence="1">Required for maturation of 30S ribosomal subunits.</text>
</comment>
<comment type="subcellular location">
    <subcellularLocation>
        <location evidence="1">Cytoplasm</location>
    </subcellularLocation>
</comment>
<comment type="similarity">
    <text evidence="1">Belongs to the RimP family.</text>
</comment>
<accession>Q62KK7</accession>
<dbReference type="EMBL" id="CP000010">
    <property type="protein sequence ID" value="AAU48839.1"/>
    <property type="molecule type" value="Genomic_DNA"/>
</dbReference>
<dbReference type="RefSeq" id="WP_004193908.1">
    <property type="nucleotide sequence ID" value="NC_006348.1"/>
</dbReference>
<dbReference type="RefSeq" id="YP_102762.1">
    <property type="nucleotide sequence ID" value="NC_006348.1"/>
</dbReference>
<dbReference type="SMR" id="Q62KK7"/>
<dbReference type="GeneID" id="93060071"/>
<dbReference type="KEGG" id="bma:BMA1063"/>
<dbReference type="PATRIC" id="fig|243160.12.peg.1099"/>
<dbReference type="eggNOG" id="COG0779">
    <property type="taxonomic scope" value="Bacteria"/>
</dbReference>
<dbReference type="HOGENOM" id="CLU_070525_1_0_4"/>
<dbReference type="Proteomes" id="UP000006693">
    <property type="component" value="Chromosome 1"/>
</dbReference>
<dbReference type="GO" id="GO:0005829">
    <property type="term" value="C:cytosol"/>
    <property type="evidence" value="ECO:0007669"/>
    <property type="project" value="TreeGrafter"/>
</dbReference>
<dbReference type="GO" id="GO:0000028">
    <property type="term" value="P:ribosomal small subunit assembly"/>
    <property type="evidence" value="ECO:0007669"/>
    <property type="project" value="TreeGrafter"/>
</dbReference>
<dbReference type="GO" id="GO:0006412">
    <property type="term" value="P:translation"/>
    <property type="evidence" value="ECO:0007669"/>
    <property type="project" value="TreeGrafter"/>
</dbReference>
<dbReference type="CDD" id="cd01734">
    <property type="entry name" value="YlxS_C"/>
    <property type="match status" value="1"/>
</dbReference>
<dbReference type="Gene3D" id="2.30.30.180">
    <property type="entry name" value="Ribosome maturation factor RimP, C-terminal domain"/>
    <property type="match status" value="1"/>
</dbReference>
<dbReference type="Gene3D" id="3.30.300.70">
    <property type="entry name" value="RimP-like superfamily, N-terminal"/>
    <property type="match status" value="1"/>
</dbReference>
<dbReference type="HAMAP" id="MF_01077">
    <property type="entry name" value="RimP"/>
    <property type="match status" value="1"/>
</dbReference>
<dbReference type="InterPro" id="IPR003728">
    <property type="entry name" value="Ribosome_maturation_RimP"/>
</dbReference>
<dbReference type="InterPro" id="IPR028998">
    <property type="entry name" value="RimP_C"/>
</dbReference>
<dbReference type="InterPro" id="IPR036847">
    <property type="entry name" value="RimP_C_sf"/>
</dbReference>
<dbReference type="InterPro" id="IPR028989">
    <property type="entry name" value="RimP_N"/>
</dbReference>
<dbReference type="InterPro" id="IPR035956">
    <property type="entry name" value="RimP_N_sf"/>
</dbReference>
<dbReference type="NCBIfam" id="NF000929">
    <property type="entry name" value="PRK00092.2-1"/>
    <property type="match status" value="1"/>
</dbReference>
<dbReference type="PANTHER" id="PTHR33867">
    <property type="entry name" value="RIBOSOME MATURATION FACTOR RIMP"/>
    <property type="match status" value="1"/>
</dbReference>
<dbReference type="PANTHER" id="PTHR33867:SF1">
    <property type="entry name" value="RIBOSOME MATURATION FACTOR RIMP"/>
    <property type="match status" value="1"/>
</dbReference>
<dbReference type="Pfam" id="PF17384">
    <property type="entry name" value="DUF150_C"/>
    <property type="match status" value="1"/>
</dbReference>
<dbReference type="Pfam" id="PF02576">
    <property type="entry name" value="RimP_N"/>
    <property type="match status" value="1"/>
</dbReference>
<dbReference type="SUPFAM" id="SSF74942">
    <property type="entry name" value="YhbC-like, C-terminal domain"/>
    <property type="match status" value="1"/>
</dbReference>
<dbReference type="SUPFAM" id="SSF75420">
    <property type="entry name" value="YhbC-like, N-terminal domain"/>
    <property type="match status" value="1"/>
</dbReference>
<gene>
    <name evidence="1" type="primary">rimP</name>
    <name type="ordered locus">BMA1063</name>
</gene>
<feature type="chain" id="PRO_0000229225" description="Ribosome maturation factor RimP">
    <location>
        <begin position="1"/>
        <end position="153"/>
    </location>
</feature>